<organism>
    <name type="scientific">Caulobacter vibrioides (strain NA1000 / CB15N)</name>
    <name type="common">Caulobacter crescentus</name>
    <dbReference type="NCBI Taxonomy" id="565050"/>
    <lineage>
        <taxon>Bacteria</taxon>
        <taxon>Pseudomonadati</taxon>
        <taxon>Pseudomonadota</taxon>
        <taxon>Alphaproteobacteria</taxon>
        <taxon>Caulobacterales</taxon>
        <taxon>Caulobacteraceae</taxon>
        <taxon>Caulobacter</taxon>
    </lineage>
</organism>
<sequence length="399" mass="41457">MGALTSPRKVVVLGSTGSIGLSTLSLFEESGAPVQILALTAGRNVERLIEQARRWKPSLAVIEDESRLDDLRAGLAGTGVEAAAGADAVRDAAAMGADWVMSAIVGAAGLAPTVAAARTGAVIALANKESLVCAGPALLAIAKAAGGSVIPVDSEHSAIFQVLQSECAHRVSRLILTASGGPFRTWDKAAMARATPEQAIAHPNWSMGAKISVDSATMMNKGLEMIEASYLFATPEDRVDVVIHPQSVIHSLVEYVDGSTLAQLGPPDMRAPIACAFAWPDRLPWPAPRLDLAAYGQLTFESPDVERFPAIGIAREALRLGGGAPAAMNAANEVAVAAFLDRRIGFLDIAGAVAGTLERMNSLGDLSVAESDAVETAMLIDGSARRIAAEVVAQKRQRA</sequence>
<dbReference type="EC" id="1.1.1.267" evidence="1"/>
<dbReference type="EMBL" id="CP001340">
    <property type="protein sequence ID" value="ACL95459.1"/>
    <property type="molecule type" value="Genomic_DNA"/>
</dbReference>
<dbReference type="RefSeq" id="WP_010919783.1">
    <property type="nucleotide sequence ID" value="NC_011916.1"/>
</dbReference>
<dbReference type="RefSeq" id="YP_002517367.1">
    <property type="nucleotide sequence ID" value="NC_011916.1"/>
</dbReference>
<dbReference type="SMR" id="B8GWR7"/>
<dbReference type="GeneID" id="7333322"/>
<dbReference type="KEGG" id="ccs:CCNA_01994"/>
<dbReference type="PATRIC" id="fig|565050.3.peg.1953"/>
<dbReference type="HOGENOM" id="CLU_035714_4_0_5"/>
<dbReference type="OrthoDB" id="9806546at2"/>
<dbReference type="PhylomeDB" id="B8GWR7"/>
<dbReference type="UniPathway" id="UPA00056">
    <property type="reaction ID" value="UER00092"/>
</dbReference>
<dbReference type="Proteomes" id="UP000001364">
    <property type="component" value="Chromosome"/>
</dbReference>
<dbReference type="GO" id="GO:0030604">
    <property type="term" value="F:1-deoxy-D-xylulose-5-phosphate reductoisomerase activity"/>
    <property type="evidence" value="ECO:0007669"/>
    <property type="project" value="UniProtKB-UniRule"/>
</dbReference>
<dbReference type="GO" id="GO:0030145">
    <property type="term" value="F:manganese ion binding"/>
    <property type="evidence" value="ECO:0007669"/>
    <property type="project" value="TreeGrafter"/>
</dbReference>
<dbReference type="GO" id="GO:0070402">
    <property type="term" value="F:NADPH binding"/>
    <property type="evidence" value="ECO:0007669"/>
    <property type="project" value="InterPro"/>
</dbReference>
<dbReference type="GO" id="GO:0051484">
    <property type="term" value="P:isopentenyl diphosphate biosynthetic process, methylerythritol 4-phosphate pathway involved in terpenoid biosynthetic process"/>
    <property type="evidence" value="ECO:0007669"/>
    <property type="project" value="TreeGrafter"/>
</dbReference>
<dbReference type="FunFam" id="3.40.50.720:FF:000045">
    <property type="entry name" value="1-deoxy-D-xylulose 5-phosphate reductoisomerase"/>
    <property type="match status" value="1"/>
</dbReference>
<dbReference type="Gene3D" id="1.10.1740.10">
    <property type="match status" value="1"/>
</dbReference>
<dbReference type="Gene3D" id="3.40.50.720">
    <property type="entry name" value="NAD(P)-binding Rossmann-like Domain"/>
    <property type="match status" value="1"/>
</dbReference>
<dbReference type="HAMAP" id="MF_00183">
    <property type="entry name" value="DXP_reductoisom"/>
    <property type="match status" value="1"/>
</dbReference>
<dbReference type="InterPro" id="IPR003821">
    <property type="entry name" value="DXP_reductoisomerase"/>
</dbReference>
<dbReference type="InterPro" id="IPR013644">
    <property type="entry name" value="DXP_reductoisomerase_C"/>
</dbReference>
<dbReference type="InterPro" id="IPR013512">
    <property type="entry name" value="DXP_reductoisomerase_N"/>
</dbReference>
<dbReference type="InterPro" id="IPR026877">
    <property type="entry name" value="DXPR_C"/>
</dbReference>
<dbReference type="InterPro" id="IPR036169">
    <property type="entry name" value="DXPR_C_sf"/>
</dbReference>
<dbReference type="InterPro" id="IPR036291">
    <property type="entry name" value="NAD(P)-bd_dom_sf"/>
</dbReference>
<dbReference type="NCBIfam" id="TIGR00243">
    <property type="entry name" value="Dxr"/>
    <property type="match status" value="1"/>
</dbReference>
<dbReference type="PANTHER" id="PTHR30525">
    <property type="entry name" value="1-DEOXY-D-XYLULOSE 5-PHOSPHATE REDUCTOISOMERASE"/>
    <property type="match status" value="1"/>
</dbReference>
<dbReference type="PANTHER" id="PTHR30525:SF0">
    <property type="entry name" value="1-DEOXY-D-XYLULOSE 5-PHOSPHATE REDUCTOISOMERASE, CHLOROPLASTIC"/>
    <property type="match status" value="1"/>
</dbReference>
<dbReference type="Pfam" id="PF08436">
    <property type="entry name" value="DXP_redisom_C"/>
    <property type="match status" value="1"/>
</dbReference>
<dbReference type="Pfam" id="PF02670">
    <property type="entry name" value="DXP_reductoisom"/>
    <property type="match status" value="1"/>
</dbReference>
<dbReference type="Pfam" id="PF13288">
    <property type="entry name" value="DXPR_C"/>
    <property type="match status" value="1"/>
</dbReference>
<dbReference type="PIRSF" id="PIRSF006205">
    <property type="entry name" value="Dxp_reductismrs"/>
    <property type="match status" value="1"/>
</dbReference>
<dbReference type="SUPFAM" id="SSF69055">
    <property type="entry name" value="1-deoxy-D-xylulose-5-phosphate reductoisomerase, C-terminal domain"/>
    <property type="match status" value="1"/>
</dbReference>
<dbReference type="SUPFAM" id="SSF55347">
    <property type="entry name" value="Glyceraldehyde-3-phosphate dehydrogenase-like, C-terminal domain"/>
    <property type="match status" value="1"/>
</dbReference>
<dbReference type="SUPFAM" id="SSF51735">
    <property type="entry name" value="NAD(P)-binding Rossmann-fold domains"/>
    <property type="match status" value="1"/>
</dbReference>
<gene>
    <name evidence="1" type="primary">dxr</name>
    <name type="ordered locus">CCNA_01994</name>
</gene>
<accession>B8GWR7</accession>
<keyword id="KW-0414">Isoprene biosynthesis</keyword>
<keyword id="KW-0464">Manganese</keyword>
<keyword id="KW-0479">Metal-binding</keyword>
<keyword id="KW-0521">NADP</keyword>
<keyword id="KW-0560">Oxidoreductase</keyword>
<keyword id="KW-1185">Reference proteome</keyword>
<protein>
    <recommendedName>
        <fullName evidence="1">1-deoxy-D-xylulose 5-phosphate reductoisomerase</fullName>
        <shortName evidence="1">DXP reductoisomerase</shortName>
        <ecNumber evidence="1">1.1.1.267</ecNumber>
    </recommendedName>
    <alternativeName>
        <fullName evidence="1">1-deoxyxylulose-5-phosphate reductoisomerase</fullName>
    </alternativeName>
    <alternativeName>
        <fullName evidence="1">2-C-methyl-D-erythritol 4-phosphate synthase</fullName>
    </alternativeName>
</protein>
<name>DXR_CAUVN</name>
<evidence type="ECO:0000255" key="1">
    <source>
        <dbReference type="HAMAP-Rule" id="MF_00183"/>
    </source>
</evidence>
<reference key="1">
    <citation type="journal article" date="2010" name="J. Bacteriol.">
        <title>The genetic basis of laboratory adaptation in Caulobacter crescentus.</title>
        <authorList>
            <person name="Marks M.E."/>
            <person name="Castro-Rojas C.M."/>
            <person name="Teiling C."/>
            <person name="Du L."/>
            <person name="Kapatral V."/>
            <person name="Walunas T.L."/>
            <person name="Crosson S."/>
        </authorList>
    </citation>
    <scope>NUCLEOTIDE SEQUENCE [LARGE SCALE GENOMIC DNA]</scope>
    <source>
        <strain>NA1000 / CB15N</strain>
    </source>
</reference>
<feature type="chain" id="PRO_1000124083" description="1-deoxy-D-xylulose 5-phosphate reductoisomerase">
    <location>
        <begin position="1"/>
        <end position="399"/>
    </location>
</feature>
<feature type="binding site" evidence="1">
    <location>
        <position position="16"/>
    </location>
    <ligand>
        <name>NADPH</name>
        <dbReference type="ChEBI" id="CHEBI:57783"/>
    </ligand>
</feature>
<feature type="binding site" evidence="1">
    <location>
        <position position="17"/>
    </location>
    <ligand>
        <name>NADPH</name>
        <dbReference type="ChEBI" id="CHEBI:57783"/>
    </ligand>
</feature>
<feature type="binding site" evidence="1">
    <location>
        <position position="18"/>
    </location>
    <ligand>
        <name>NADPH</name>
        <dbReference type="ChEBI" id="CHEBI:57783"/>
    </ligand>
</feature>
<feature type="binding site" evidence="1">
    <location>
        <position position="19"/>
    </location>
    <ligand>
        <name>NADPH</name>
        <dbReference type="ChEBI" id="CHEBI:57783"/>
    </ligand>
</feature>
<feature type="binding site" evidence="1">
    <location>
        <position position="42"/>
    </location>
    <ligand>
        <name>NADPH</name>
        <dbReference type="ChEBI" id="CHEBI:57783"/>
    </ligand>
</feature>
<feature type="binding site" evidence="1">
    <location>
        <position position="43"/>
    </location>
    <ligand>
        <name>NADPH</name>
        <dbReference type="ChEBI" id="CHEBI:57783"/>
    </ligand>
</feature>
<feature type="binding site" evidence="1">
    <location>
        <position position="44"/>
    </location>
    <ligand>
        <name>NADPH</name>
        <dbReference type="ChEBI" id="CHEBI:57783"/>
    </ligand>
</feature>
<feature type="binding site" evidence="1">
    <location>
        <position position="127"/>
    </location>
    <ligand>
        <name>NADPH</name>
        <dbReference type="ChEBI" id="CHEBI:57783"/>
    </ligand>
</feature>
<feature type="binding site" evidence="1">
    <location>
        <position position="128"/>
    </location>
    <ligand>
        <name>1-deoxy-D-xylulose 5-phosphate</name>
        <dbReference type="ChEBI" id="CHEBI:57792"/>
    </ligand>
</feature>
<feature type="binding site" evidence="1">
    <location>
        <position position="129"/>
    </location>
    <ligand>
        <name>NADPH</name>
        <dbReference type="ChEBI" id="CHEBI:57783"/>
    </ligand>
</feature>
<feature type="binding site" evidence="1">
    <location>
        <position position="153"/>
    </location>
    <ligand>
        <name>Mn(2+)</name>
        <dbReference type="ChEBI" id="CHEBI:29035"/>
    </ligand>
</feature>
<feature type="binding site" evidence="1">
    <location>
        <position position="154"/>
    </location>
    <ligand>
        <name>1-deoxy-D-xylulose 5-phosphate</name>
        <dbReference type="ChEBI" id="CHEBI:57792"/>
    </ligand>
</feature>
<feature type="binding site" evidence="1">
    <location>
        <position position="155"/>
    </location>
    <ligand>
        <name>1-deoxy-D-xylulose 5-phosphate</name>
        <dbReference type="ChEBI" id="CHEBI:57792"/>
    </ligand>
</feature>
<feature type="binding site" evidence="1">
    <location>
        <position position="155"/>
    </location>
    <ligand>
        <name>Mn(2+)</name>
        <dbReference type="ChEBI" id="CHEBI:29035"/>
    </ligand>
</feature>
<feature type="binding site" evidence="1">
    <location>
        <position position="179"/>
    </location>
    <ligand>
        <name>1-deoxy-D-xylulose 5-phosphate</name>
        <dbReference type="ChEBI" id="CHEBI:57792"/>
    </ligand>
</feature>
<feature type="binding site" evidence="1">
    <location>
        <position position="202"/>
    </location>
    <ligand>
        <name>1-deoxy-D-xylulose 5-phosphate</name>
        <dbReference type="ChEBI" id="CHEBI:57792"/>
    </ligand>
</feature>
<feature type="binding site" evidence="1">
    <location>
        <position position="208"/>
    </location>
    <ligand>
        <name>NADPH</name>
        <dbReference type="ChEBI" id="CHEBI:57783"/>
    </ligand>
</feature>
<feature type="binding site" evidence="1">
    <location>
        <position position="215"/>
    </location>
    <ligand>
        <name>1-deoxy-D-xylulose 5-phosphate</name>
        <dbReference type="ChEBI" id="CHEBI:57792"/>
    </ligand>
</feature>
<feature type="binding site" evidence="1">
    <location>
        <position position="220"/>
    </location>
    <ligand>
        <name>1-deoxy-D-xylulose 5-phosphate</name>
        <dbReference type="ChEBI" id="CHEBI:57792"/>
    </ligand>
</feature>
<feature type="binding site" evidence="1">
    <location>
        <position position="221"/>
    </location>
    <ligand>
        <name>1-deoxy-D-xylulose 5-phosphate</name>
        <dbReference type="ChEBI" id="CHEBI:57792"/>
    </ligand>
</feature>
<feature type="binding site" evidence="1">
    <location>
        <position position="224"/>
    </location>
    <ligand>
        <name>1-deoxy-D-xylulose 5-phosphate</name>
        <dbReference type="ChEBI" id="CHEBI:57792"/>
    </ligand>
</feature>
<feature type="binding site" evidence="1">
    <location>
        <position position="224"/>
    </location>
    <ligand>
        <name>Mn(2+)</name>
        <dbReference type="ChEBI" id="CHEBI:29035"/>
    </ligand>
</feature>
<comment type="function">
    <text evidence="1">Catalyzes the NADPH-dependent rearrangement and reduction of 1-deoxy-D-xylulose-5-phosphate (DXP) to 2-C-methyl-D-erythritol 4-phosphate (MEP).</text>
</comment>
<comment type="catalytic activity">
    <reaction evidence="1">
        <text>2-C-methyl-D-erythritol 4-phosphate + NADP(+) = 1-deoxy-D-xylulose 5-phosphate + NADPH + H(+)</text>
        <dbReference type="Rhea" id="RHEA:13717"/>
        <dbReference type="ChEBI" id="CHEBI:15378"/>
        <dbReference type="ChEBI" id="CHEBI:57783"/>
        <dbReference type="ChEBI" id="CHEBI:57792"/>
        <dbReference type="ChEBI" id="CHEBI:58262"/>
        <dbReference type="ChEBI" id="CHEBI:58349"/>
        <dbReference type="EC" id="1.1.1.267"/>
    </reaction>
    <physiologicalReaction direction="right-to-left" evidence="1">
        <dbReference type="Rhea" id="RHEA:13719"/>
    </physiologicalReaction>
</comment>
<comment type="cofactor">
    <cofactor evidence="1">
        <name>Mg(2+)</name>
        <dbReference type="ChEBI" id="CHEBI:18420"/>
    </cofactor>
    <cofactor evidence="1">
        <name>Mn(2+)</name>
        <dbReference type="ChEBI" id="CHEBI:29035"/>
    </cofactor>
</comment>
<comment type="pathway">
    <text evidence="1">Isoprenoid biosynthesis; isopentenyl diphosphate biosynthesis via DXP pathway; isopentenyl diphosphate from 1-deoxy-D-xylulose 5-phosphate: step 1/6.</text>
</comment>
<comment type="similarity">
    <text evidence="1">Belongs to the DXR family.</text>
</comment>
<proteinExistence type="inferred from homology"/>